<comment type="function">
    <text evidence="1">One of the primary rRNA binding proteins, it binds directly to 16S rRNA where it nucleates assembly of the head domain of the 30S subunit. Is located at the subunit interface close to the decoding center, probably blocks exit of the E-site tRNA.</text>
</comment>
<comment type="subunit">
    <text evidence="1">Part of the 30S ribosomal subunit. Contacts proteins S9 and S11.</text>
</comment>
<comment type="similarity">
    <text evidence="1">Belongs to the universal ribosomal protein uS7 family.</text>
</comment>
<name>RS7_DICT6</name>
<gene>
    <name evidence="1" type="primary">rpsG</name>
    <name type="ordered locus">DICTH_0833</name>
</gene>
<feature type="chain" id="PRO_1000125934" description="Small ribosomal subunit protein uS7">
    <location>
        <begin position="1"/>
        <end position="156"/>
    </location>
</feature>
<sequence>MPRRGPVTPREIPPDPVYNSVLVQKLINKVMLDGKKSIAEKIVYGAMEIIREKTKQDPLVVLEKAVQNVTPLLEVRPRRVGGATYQVPIEVPPRRGLSLALRWIVRAARERKGMPMKERLALEILDALNNTGGAIKKRDEMHRMAEANKAFAHYRW</sequence>
<keyword id="KW-0687">Ribonucleoprotein</keyword>
<keyword id="KW-0689">Ribosomal protein</keyword>
<keyword id="KW-0694">RNA-binding</keyword>
<keyword id="KW-0699">rRNA-binding</keyword>
<keyword id="KW-0820">tRNA-binding</keyword>
<dbReference type="EMBL" id="CP001146">
    <property type="protein sequence ID" value="ACI19333.1"/>
    <property type="molecule type" value="Genomic_DNA"/>
</dbReference>
<dbReference type="RefSeq" id="WP_012547965.1">
    <property type="nucleotide sequence ID" value="NC_011297.1"/>
</dbReference>
<dbReference type="SMR" id="B5YDT9"/>
<dbReference type="STRING" id="309799.DICTH_0833"/>
<dbReference type="PaxDb" id="309799-DICTH_0833"/>
<dbReference type="KEGG" id="dth:DICTH_0833"/>
<dbReference type="eggNOG" id="COG0049">
    <property type="taxonomic scope" value="Bacteria"/>
</dbReference>
<dbReference type="HOGENOM" id="CLU_072226_1_1_0"/>
<dbReference type="OrthoDB" id="9807653at2"/>
<dbReference type="Proteomes" id="UP000001733">
    <property type="component" value="Chromosome"/>
</dbReference>
<dbReference type="GO" id="GO:0015935">
    <property type="term" value="C:small ribosomal subunit"/>
    <property type="evidence" value="ECO:0007669"/>
    <property type="project" value="InterPro"/>
</dbReference>
<dbReference type="GO" id="GO:0019843">
    <property type="term" value="F:rRNA binding"/>
    <property type="evidence" value="ECO:0007669"/>
    <property type="project" value="UniProtKB-UniRule"/>
</dbReference>
<dbReference type="GO" id="GO:0003735">
    <property type="term" value="F:structural constituent of ribosome"/>
    <property type="evidence" value="ECO:0007669"/>
    <property type="project" value="InterPro"/>
</dbReference>
<dbReference type="GO" id="GO:0000049">
    <property type="term" value="F:tRNA binding"/>
    <property type="evidence" value="ECO:0007669"/>
    <property type="project" value="UniProtKB-UniRule"/>
</dbReference>
<dbReference type="GO" id="GO:0006412">
    <property type="term" value="P:translation"/>
    <property type="evidence" value="ECO:0007669"/>
    <property type="project" value="UniProtKB-UniRule"/>
</dbReference>
<dbReference type="CDD" id="cd14869">
    <property type="entry name" value="uS7_Bacteria"/>
    <property type="match status" value="1"/>
</dbReference>
<dbReference type="FunFam" id="1.10.455.10:FF:000001">
    <property type="entry name" value="30S ribosomal protein S7"/>
    <property type="match status" value="1"/>
</dbReference>
<dbReference type="Gene3D" id="1.10.455.10">
    <property type="entry name" value="Ribosomal protein S7 domain"/>
    <property type="match status" value="1"/>
</dbReference>
<dbReference type="HAMAP" id="MF_00480_B">
    <property type="entry name" value="Ribosomal_uS7_B"/>
    <property type="match status" value="1"/>
</dbReference>
<dbReference type="InterPro" id="IPR000235">
    <property type="entry name" value="Ribosomal_uS7"/>
</dbReference>
<dbReference type="InterPro" id="IPR005717">
    <property type="entry name" value="Ribosomal_uS7_bac/org-type"/>
</dbReference>
<dbReference type="InterPro" id="IPR020606">
    <property type="entry name" value="Ribosomal_uS7_CS"/>
</dbReference>
<dbReference type="InterPro" id="IPR023798">
    <property type="entry name" value="Ribosomal_uS7_dom"/>
</dbReference>
<dbReference type="InterPro" id="IPR036823">
    <property type="entry name" value="Ribosomal_uS7_dom_sf"/>
</dbReference>
<dbReference type="NCBIfam" id="TIGR01029">
    <property type="entry name" value="rpsG_bact"/>
    <property type="match status" value="1"/>
</dbReference>
<dbReference type="PANTHER" id="PTHR11205">
    <property type="entry name" value="RIBOSOMAL PROTEIN S7"/>
    <property type="match status" value="1"/>
</dbReference>
<dbReference type="Pfam" id="PF00177">
    <property type="entry name" value="Ribosomal_S7"/>
    <property type="match status" value="1"/>
</dbReference>
<dbReference type="PIRSF" id="PIRSF002122">
    <property type="entry name" value="RPS7p_RPS7a_RPS5e_RPS7o"/>
    <property type="match status" value="1"/>
</dbReference>
<dbReference type="SUPFAM" id="SSF47973">
    <property type="entry name" value="Ribosomal protein S7"/>
    <property type="match status" value="1"/>
</dbReference>
<dbReference type="PROSITE" id="PS00052">
    <property type="entry name" value="RIBOSOMAL_S7"/>
    <property type="match status" value="1"/>
</dbReference>
<reference key="1">
    <citation type="journal article" date="2014" name="Genome Announc.">
        <title>Complete Genome Sequence of the Extreme Thermophile Dictyoglomus thermophilum H-6-12.</title>
        <authorList>
            <person name="Coil D.A."/>
            <person name="Badger J.H."/>
            <person name="Forberger H.C."/>
            <person name="Riggs F."/>
            <person name="Madupu R."/>
            <person name="Fedorova N."/>
            <person name="Ward N."/>
            <person name="Robb F.T."/>
            <person name="Eisen J.A."/>
        </authorList>
    </citation>
    <scope>NUCLEOTIDE SEQUENCE [LARGE SCALE GENOMIC DNA]</scope>
    <source>
        <strain>ATCC 35947 / DSM 3960 / H-6-12</strain>
    </source>
</reference>
<protein>
    <recommendedName>
        <fullName evidence="1">Small ribosomal subunit protein uS7</fullName>
    </recommendedName>
    <alternativeName>
        <fullName evidence="2">30S ribosomal protein S7</fullName>
    </alternativeName>
</protein>
<proteinExistence type="inferred from homology"/>
<organism>
    <name type="scientific">Dictyoglomus thermophilum (strain ATCC 35947 / DSM 3960 / H-6-12)</name>
    <dbReference type="NCBI Taxonomy" id="309799"/>
    <lineage>
        <taxon>Bacteria</taxon>
        <taxon>Pseudomonadati</taxon>
        <taxon>Dictyoglomota</taxon>
        <taxon>Dictyoglomia</taxon>
        <taxon>Dictyoglomales</taxon>
        <taxon>Dictyoglomaceae</taxon>
        <taxon>Dictyoglomus</taxon>
    </lineage>
</organism>
<evidence type="ECO:0000255" key="1">
    <source>
        <dbReference type="HAMAP-Rule" id="MF_00480"/>
    </source>
</evidence>
<evidence type="ECO:0000305" key="2"/>
<accession>B5YDT9</accession>